<organism>
    <name type="scientific">Gloeothece citriformis (strain PCC 7424)</name>
    <name type="common">Cyanothece sp. (strain PCC 7424)</name>
    <dbReference type="NCBI Taxonomy" id="65393"/>
    <lineage>
        <taxon>Bacteria</taxon>
        <taxon>Bacillati</taxon>
        <taxon>Cyanobacteriota</taxon>
        <taxon>Cyanophyceae</taxon>
        <taxon>Oscillatoriophycideae</taxon>
        <taxon>Chroococcales</taxon>
        <taxon>Aphanothecaceae</taxon>
        <taxon>Gloeothece</taxon>
        <taxon>Gloeothece citriformis</taxon>
    </lineage>
</organism>
<feature type="chain" id="PRO_1000117018" description="Elongation factor 4">
    <location>
        <begin position="1"/>
        <end position="604"/>
    </location>
</feature>
<feature type="domain" description="tr-type G">
    <location>
        <begin position="7"/>
        <end position="189"/>
    </location>
</feature>
<feature type="binding site" evidence="1">
    <location>
        <begin position="19"/>
        <end position="24"/>
    </location>
    <ligand>
        <name>GTP</name>
        <dbReference type="ChEBI" id="CHEBI:37565"/>
    </ligand>
</feature>
<feature type="binding site" evidence="1">
    <location>
        <begin position="136"/>
        <end position="139"/>
    </location>
    <ligand>
        <name>GTP</name>
        <dbReference type="ChEBI" id="CHEBI:37565"/>
    </ligand>
</feature>
<proteinExistence type="inferred from homology"/>
<gene>
    <name evidence="1" type="primary">lepA</name>
    <name type="ordered locus">PCC7424_1118</name>
</gene>
<evidence type="ECO:0000255" key="1">
    <source>
        <dbReference type="HAMAP-Rule" id="MF_00071"/>
    </source>
</evidence>
<accession>B7KJX0</accession>
<protein>
    <recommendedName>
        <fullName evidence="1">Elongation factor 4</fullName>
        <shortName evidence="1">EF-4</shortName>
        <ecNumber evidence="1">3.6.5.n1</ecNumber>
    </recommendedName>
    <alternativeName>
        <fullName evidence="1">Ribosomal back-translocase LepA</fullName>
    </alternativeName>
</protein>
<name>LEPA_GLOC7</name>
<reference key="1">
    <citation type="journal article" date="2011" name="MBio">
        <title>Novel metabolic attributes of the genus Cyanothece, comprising a group of unicellular nitrogen-fixing Cyanobacteria.</title>
        <authorList>
            <person name="Bandyopadhyay A."/>
            <person name="Elvitigala T."/>
            <person name="Welsh E."/>
            <person name="Stockel J."/>
            <person name="Liberton M."/>
            <person name="Min H."/>
            <person name="Sherman L.A."/>
            <person name="Pakrasi H.B."/>
        </authorList>
    </citation>
    <scope>NUCLEOTIDE SEQUENCE [LARGE SCALE GENOMIC DNA]</scope>
    <source>
        <strain>PCC 7424</strain>
    </source>
</reference>
<comment type="function">
    <text evidence="1">Required for accurate and efficient protein synthesis under certain stress conditions. May act as a fidelity factor of the translation reaction, by catalyzing a one-codon backward translocation of tRNAs on improperly translocated ribosomes. Back-translocation proceeds from a post-translocation (POST) complex to a pre-translocation (PRE) complex, thus giving elongation factor G a second chance to translocate the tRNAs correctly. Binds to ribosomes in a GTP-dependent manner.</text>
</comment>
<comment type="catalytic activity">
    <reaction evidence="1">
        <text>GTP + H2O = GDP + phosphate + H(+)</text>
        <dbReference type="Rhea" id="RHEA:19669"/>
        <dbReference type="ChEBI" id="CHEBI:15377"/>
        <dbReference type="ChEBI" id="CHEBI:15378"/>
        <dbReference type="ChEBI" id="CHEBI:37565"/>
        <dbReference type="ChEBI" id="CHEBI:43474"/>
        <dbReference type="ChEBI" id="CHEBI:58189"/>
        <dbReference type="EC" id="3.6.5.n1"/>
    </reaction>
</comment>
<comment type="subcellular location">
    <subcellularLocation>
        <location evidence="1">Cell inner membrane</location>
        <topology evidence="1">Peripheral membrane protein</topology>
        <orientation evidence="1">Cytoplasmic side</orientation>
    </subcellularLocation>
</comment>
<comment type="similarity">
    <text evidence="1">Belongs to the TRAFAC class translation factor GTPase superfamily. Classic translation factor GTPase family. LepA subfamily.</text>
</comment>
<keyword id="KW-0997">Cell inner membrane</keyword>
<keyword id="KW-1003">Cell membrane</keyword>
<keyword id="KW-0342">GTP-binding</keyword>
<keyword id="KW-0378">Hydrolase</keyword>
<keyword id="KW-0472">Membrane</keyword>
<keyword id="KW-0547">Nucleotide-binding</keyword>
<keyword id="KW-0648">Protein biosynthesis</keyword>
<keyword id="KW-1185">Reference proteome</keyword>
<sequence>MTDVPVSRIRNFSIIAHIDHGKSTLADRMLQMTGTVEDRKMKEQFLDNLDLERERGITIKLQAARMNYTAQDGQHYVLNLIDTPGHVDFSYEVSRSLAACEGALLVVDASQGVEAQTLANVYLALENNLEIIPVLNKIDLPGAEPERVAQEIEEIVGLDCSGIIKASAKEGIGVNEILESIVHLVPPPDDTTNKPLRALIFDSYYDSYRGVVVYFRVMDGTVKKGDRVLLMASGKEYEIDELGVLSPHQIQVDELHAGEVGYFAAAIKTVEDARVGDTITLAPKPADEPLPGYKEAKPMVFCGLFPTDSDQYEDLRDALHKLKLNDAALNFEPETSTAMGFGFRCGFLGLLHMEIVQERLEREYDLDLITTAPSVVYRVTTTEEEVIEVDNPSQLPPPQKRIKIEEPYVHMEMITPETYVGALMELCQNRRGEFKDMRYFTQTRTALVYELPLAEIVTDFFDQLKSRTRGYASMEYHLIGYRENALVKLDIMVNGDGVDALAMIVHRDKAYNVGRALTEKLKELIPRHQFKVPIQAAIGSKVIASEHIPALRKDVLAKCYGGDITRKKKLLEKQAKGKKRMKSIGTVDVPQEAFMAVLRLNNES</sequence>
<dbReference type="EC" id="3.6.5.n1" evidence="1"/>
<dbReference type="EMBL" id="CP001291">
    <property type="protein sequence ID" value="ACK69569.1"/>
    <property type="molecule type" value="Genomic_DNA"/>
</dbReference>
<dbReference type="RefSeq" id="WP_012598515.1">
    <property type="nucleotide sequence ID" value="NC_011729.1"/>
</dbReference>
<dbReference type="SMR" id="B7KJX0"/>
<dbReference type="STRING" id="65393.PCC7424_1118"/>
<dbReference type="KEGG" id="cyc:PCC7424_1118"/>
<dbReference type="eggNOG" id="COG0481">
    <property type="taxonomic scope" value="Bacteria"/>
</dbReference>
<dbReference type="HOGENOM" id="CLU_009995_3_3_3"/>
<dbReference type="OrthoDB" id="580826at2"/>
<dbReference type="Proteomes" id="UP000002384">
    <property type="component" value="Chromosome"/>
</dbReference>
<dbReference type="GO" id="GO:0005886">
    <property type="term" value="C:plasma membrane"/>
    <property type="evidence" value="ECO:0007669"/>
    <property type="project" value="UniProtKB-SubCell"/>
</dbReference>
<dbReference type="GO" id="GO:0005525">
    <property type="term" value="F:GTP binding"/>
    <property type="evidence" value="ECO:0007669"/>
    <property type="project" value="UniProtKB-KW"/>
</dbReference>
<dbReference type="GO" id="GO:0003924">
    <property type="term" value="F:GTPase activity"/>
    <property type="evidence" value="ECO:0007669"/>
    <property type="project" value="InterPro"/>
</dbReference>
<dbReference type="GO" id="GO:0043022">
    <property type="term" value="F:ribosome binding"/>
    <property type="evidence" value="ECO:0007669"/>
    <property type="project" value="TreeGrafter"/>
</dbReference>
<dbReference type="GO" id="GO:0045727">
    <property type="term" value="P:positive regulation of translation"/>
    <property type="evidence" value="ECO:0007669"/>
    <property type="project" value="TreeGrafter"/>
</dbReference>
<dbReference type="GO" id="GO:0006412">
    <property type="term" value="P:translation"/>
    <property type="evidence" value="ECO:0007669"/>
    <property type="project" value="UniProtKB-KW"/>
</dbReference>
<dbReference type="CDD" id="cd03699">
    <property type="entry name" value="EF4_II"/>
    <property type="match status" value="1"/>
</dbReference>
<dbReference type="CDD" id="cd16260">
    <property type="entry name" value="EF4_III"/>
    <property type="match status" value="1"/>
</dbReference>
<dbReference type="CDD" id="cd01890">
    <property type="entry name" value="LepA"/>
    <property type="match status" value="1"/>
</dbReference>
<dbReference type="CDD" id="cd03709">
    <property type="entry name" value="lepA_C"/>
    <property type="match status" value="1"/>
</dbReference>
<dbReference type="FunFam" id="3.40.50.300:FF:000078">
    <property type="entry name" value="Elongation factor 4"/>
    <property type="match status" value="1"/>
</dbReference>
<dbReference type="FunFam" id="2.40.30.10:FF:000015">
    <property type="entry name" value="Translation factor GUF1, mitochondrial"/>
    <property type="match status" value="1"/>
</dbReference>
<dbReference type="FunFam" id="3.30.70.240:FF:000007">
    <property type="entry name" value="Translation factor GUF1, mitochondrial"/>
    <property type="match status" value="1"/>
</dbReference>
<dbReference type="FunFam" id="3.30.70.2570:FF:000001">
    <property type="entry name" value="Translation factor GUF1, mitochondrial"/>
    <property type="match status" value="1"/>
</dbReference>
<dbReference type="FunFam" id="3.30.70.870:FF:000004">
    <property type="entry name" value="Translation factor GUF1, mitochondrial"/>
    <property type="match status" value="1"/>
</dbReference>
<dbReference type="Gene3D" id="3.30.70.240">
    <property type="match status" value="1"/>
</dbReference>
<dbReference type="Gene3D" id="3.30.70.2570">
    <property type="entry name" value="Elongation factor 4, C-terminal domain"/>
    <property type="match status" value="1"/>
</dbReference>
<dbReference type="Gene3D" id="3.30.70.870">
    <property type="entry name" value="Elongation Factor G (Translational Gtpase), domain 3"/>
    <property type="match status" value="1"/>
</dbReference>
<dbReference type="Gene3D" id="3.40.50.300">
    <property type="entry name" value="P-loop containing nucleotide triphosphate hydrolases"/>
    <property type="match status" value="1"/>
</dbReference>
<dbReference type="Gene3D" id="2.40.30.10">
    <property type="entry name" value="Translation factors"/>
    <property type="match status" value="1"/>
</dbReference>
<dbReference type="HAMAP" id="MF_03138">
    <property type="entry name" value="GUFP"/>
    <property type="match status" value="1"/>
</dbReference>
<dbReference type="HAMAP" id="MF_00071">
    <property type="entry name" value="LepA"/>
    <property type="match status" value="1"/>
</dbReference>
<dbReference type="InterPro" id="IPR006297">
    <property type="entry name" value="EF-4"/>
</dbReference>
<dbReference type="InterPro" id="IPR035647">
    <property type="entry name" value="EFG_III/V"/>
</dbReference>
<dbReference type="InterPro" id="IPR000640">
    <property type="entry name" value="EFG_V-like"/>
</dbReference>
<dbReference type="InterPro" id="IPR004161">
    <property type="entry name" value="EFTu-like_2"/>
</dbReference>
<dbReference type="InterPro" id="IPR031157">
    <property type="entry name" value="G_TR_CS"/>
</dbReference>
<dbReference type="InterPro" id="IPR027518">
    <property type="entry name" value="GUFP"/>
</dbReference>
<dbReference type="InterPro" id="IPR038363">
    <property type="entry name" value="LepA_C_sf"/>
</dbReference>
<dbReference type="InterPro" id="IPR013842">
    <property type="entry name" value="LepA_CTD"/>
</dbReference>
<dbReference type="InterPro" id="IPR035654">
    <property type="entry name" value="LepA_IV"/>
</dbReference>
<dbReference type="InterPro" id="IPR027417">
    <property type="entry name" value="P-loop_NTPase"/>
</dbReference>
<dbReference type="InterPro" id="IPR005225">
    <property type="entry name" value="Small_GTP-bd"/>
</dbReference>
<dbReference type="InterPro" id="IPR000795">
    <property type="entry name" value="T_Tr_GTP-bd_dom"/>
</dbReference>
<dbReference type="NCBIfam" id="TIGR01393">
    <property type="entry name" value="lepA"/>
    <property type="match status" value="1"/>
</dbReference>
<dbReference type="NCBIfam" id="TIGR00231">
    <property type="entry name" value="small_GTP"/>
    <property type="match status" value="1"/>
</dbReference>
<dbReference type="PANTHER" id="PTHR43512:SF4">
    <property type="entry name" value="TRANSLATION FACTOR GUF1 HOMOLOG, CHLOROPLASTIC"/>
    <property type="match status" value="1"/>
</dbReference>
<dbReference type="PANTHER" id="PTHR43512">
    <property type="entry name" value="TRANSLATION FACTOR GUF1-RELATED"/>
    <property type="match status" value="1"/>
</dbReference>
<dbReference type="Pfam" id="PF00679">
    <property type="entry name" value="EFG_C"/>
    <property type="match status" value="1"/>
</dbReference>
<dbReference type="Pfam" id="PF00009">
    <property type="entry name" value="GTP_EFTU"/>
    <property type="match status" value="1"/>
</dbReference>
<dbReference type="Pfam" id="PF03144">
    <property type="entry name" value="GTP_EFTU_D2"/>
    <property type="match status" value="1"/>
</dbReference>
<dbReference type="Pfam" id="PF06421">
    <property type="entry name" value="LepA_C"/>
    <property type="match status" value="1"/>
</dbReference>
<dbReference type="PRINTS" id="PR00315">
    <property type="entry name" value="ELONGATNFCT"/>
</dbReference>
<dbReference type="SUPFAM" id="SSF54980">
    <property type="entry name" value="EF-G C-terminal domain-like"/>
    <property type="match status" value="2"/>
</dbReference>
<dbReference type="SUPFAM" id="SSF52540">
    <property type="entry name" value="P-loop containing nucleoside triphosphate hydrolases"/>
    <property type="match status" value="1"/>
</dbReference>
<dbReference type="PROSITE" id="PS00301">
    <property type="entry name" value="G_TR_1"/>
    <property type="match status" value="1"/>
</dbReference>
<dbReference type="PROSITE" id="PS51722">
    <property type="entry name" value="G_TR_2"/>
    <property type="match status" value="1"/>
</dbReference>